<accession>Q37355</accession>
<reference key="1">
    <citation type="journal article" date="1994" name="Mol. Cell. Biol.">
        <title>RNA editing and mitochondrial genomic organization in the cryptobiid kinetoplastid protozoan Trypanoplasma borreli.</title>
        <authorList>
            <person name="Maslov D.A."/>
            <person name="Simpson L."/>
        </authorList>
    </citation>
    <scope>NUCLEOTIDE SEQUENCE [GENOMIC DNA]</scope>
    <source>
        <strain>PG-JH</strain>
    </source>
</reference>
<evidence type="ECO:0000250" key="1">
    <source>
        <dbReference type="UniProtKB" id="P00420"/>
    </source>
</evidence>
<evidence type="ECO:0000255" key="2"/>
<evidence type="ECO:0000305" key="3"/>
<keyword id="KW-0472">Membrane</keyword>
<keyword id="KW-0496">Mitochondrion</keyword>
<keyword id="KW-0999">Mitochondrion inner membrane</keyword>
<keyword id="KW-1278">Translocase</keyword>
<keyword id="KW-0812">Transmembrane</keyword>
<keyword id="KW-1133">Transmembrane helix</keyword>
<feature type="chain" id="PRO_0000183869" description="Cytochrome c oxidase subunit 3">
    <location>
        <begin position="1"/>
        <end position="286"/>
    </location>
</feature>
<feature type="transmembrane region" description="Helical" evidence="2">
    <location>
        <begin position="13"/>
        <end position="33"/>
    </location>
</feature>
<feature type="transmembrane region" description="Helical" evidence="2">
    <location>
        <begin position="40"/>
        <end position="60"/>
    </location>
</feature>
<feature type="transmembrane region" description="Helical" evidence="2">
    <location>
        <begin position="85"/>
        <end position="105"/>
    </location>
</feature>
<feature type="transmembrane region" description="Helical" evidence="2">
    <location>
        <begin position="133"/>
        <end position="153"/>
    </location>
</feature>
<feature type="transmembrane region" description="Helical" evidence="2">
    <location>
        <begin position="173"/>
        <end position="195"/>
    </location>
</feature>
<feature type="transmembrane region" description="Helical" evidence="2">
    <location>
        <begin position="199"/>
        <end position="221"/>
    </location>
</feature>
<feature type="transmembrane region" description="Helical" evidence="2">
    <location>
        <begin position="223"/>
        <end position="243"/>
    </location>
</feature>
<feature type="transmembrane region" description="Helical" evidence="2">
    <location>
        <begin position="253"/>
        <end position="273"/>
    </location>
</feature>
<protein>
    <recommendedName>
        <fullName>Cytochrome c oxidase subunit 3</fullName>
        <ecNumber>7.1.1.9</ecNumber>
    </recommendedName>
    <alternativeName>
        <fullName>Cytochrome c oxidase polypeptide III</fullName>
    </alternativeName>
</protein>
<organism>
    <name type="scientific">Trypanoplasma borreli</name>
    <dbReference type="NCBI Taxonomy" id="5710"/>
    <lineage>
        <taxon>Eukaryota</taxon>
        <taxon>Discoba</taxon>
        <taxon>Euglenozoa</taxon>
        <taxon>Kinetoplastea</taxon>
        <taxon>Metakinetoplastina</taxon>
        <taxon>Parabodonida</taxon>
        <taxon>Trypanoplasma</taxon>
    </lineage>
</organism>
<geneLocation type="mitochondrion"/>
<sequence length="286" mass="33313">MYLFRIISLNLSGVFLFLSYTPLYITYLLGVVISSMMLTVGTFAITLDIILCILVVCFLITTLLVIDSVLDSIRGLNSVGVLVRIIQYCFLWFVFSEFMLFVVFFYTLYSECLLINVEFTNIGCPVTTKYSNIILDLGYIFYWFLFDFFNIILNTVYLFISGLCCNNVLSSILCREYLLSKIILGSSIFLGLLFIWNQVWEFNILIITLSVNIFCTILFSIDTLHFMHVLVGIVFMIISIFNIQSKKIGDIRIVLIVCIIFYWHFVDIVWFFLLRFIYLDTLMVLK</sequence>
<dbReference type="EC" id="7.1.1.9"/>
<dbReference type="EMBL" id="U14181">
    <property type="protein sequence ID" value="AAA65016.1"/>
    <property type="molecule type" value="Genomic_DNA"/>
</dbReference>
<dbReference type="SMR" id="Q37355"/>
<dbReference type="GO" id="GO:0005743">
    <property type="term" value="C:mitochondrial inner membrane"/>
    <property type="evidence" value="ECO:0007669"/>
    <property type="project" value="UniProtKB-SubCell"/>
</dbReference>
<dbReference type="GO" id="GO:0004129">
    <property type="term" value="F:cytochrome-c oxidase activity"/>
    <property type="evidence" value="ECO:0007669"/>
    <property type="project" value="UniProtKB-EC"/>
</dbReference>
<dbReference type="GO" id="GO:0019646">
    <property type="term" value="P:aerobic electron transport chain"/>
    <property type="evidence" value="ECO:0007669"/>
    <property type="project" value="InterPro"/>
</dbReference>
<dbReference type="CDD" id="cd00386">
    <property type="entry name" value="Heme_Cu_Oxidase_III_like"/>
    <property type="match status" value="1"/>
</dbReference>
<dbReference type="Gene3D" id="1.20.120.80">
    <property type="entry name" value="Cytochrome c oxidase, subunit III, four-helix bundle"/>
    <property type="match status" value="1"/>
</dbReference>
<dbReference type="InterPro" id="IPR024791">
    <property type="entry name" value="Cyt_c/ubiquinol_Oxase_su3"/>
</dbReference>
<dbReference type="InterPro" id="IPR000298">
    <property type="entry name" value="Cyt_c_oxidase-like_su3"/>
</dbReference>
<dbReference type="InterPro" id="IPR035973">
    <property type="entry name" value="Cyt_c_oxidase_su3-like_sf"/>
</dbReference>
<dbReference type="InterPro" id="IPR013833">
    <property type="entry name" value="Cyt_c_oxidase_su3_a-hlx"/>
</dbReference>
<dbReference type="PANTHER" id="PTHR11403:SF7">
    <property type="entry name" value="CYTOCHROME C OXIDASE SUBUNIT 3"/>
    <property type="match status" value="1"/>
</dbReference>
<dbReference type="PANTHER" id="PTHR11403">
    <property type="entry name" value="CYTOCHROME C OXIDASE SUBUNIT III"/>
    <property type="match status" value="1"/>
</dbReference>
<dbReference type="Pfam" id="PF00510">
    <property type="entry name" value="COX3"/>
    <property type="match status" value="1"/>
</dbReference>
<dbReference type="SUPFAM" id="SSF81452">
    <property type="entry name" value="Cytochrome c oxidase subunit III-like"/>
    <property type="match status" value="1"/>
</dbReference>
<dbReference type="PROSITE" id="PS50253">
    <property type="entry name" value="COX3"/>
    <property type="match status" value="1"/>
</dbReference>
<name>COX3_TRYBO</name>
<proteinExistence type="inferred from homology"/>
<comment type="function">
    <text evidence="1">Component of the cytochrome c oxidase, the last enzyme in the mitochondrial electron transport chain which drives oxidative phosphorylation. The respiratory chain contains 3 multisubunit complexes succinate dehydrogenase (complex II, CII), ubiquinol-cytochrome c oxidoreductase (cytochrome b-c1 complex, complex III, CIII) and cytochrome c oxidase (complex IV, CIV), that cooperate to transfer electrons derived from NADH and succinate to molecular oxygen, creating an electrochemical gradient over the inner membrane that drives transmembrane transport and the ATP synthase. Cytochrome c oxidase is the component of the respiratory chain that catalyzes the reduction of oxygen to water. Electrons originating from reduced cytochrome c in the intermembrane space (IMS) are transferred via the dinuclear copper A center (CU(A)) of subunit 2 and heme A of subunit 1 to the active site in subunit 1, a binuclear center (BNC) formed by heme A3 and copper B (CU(B)). The BNC reduces molecular oxygen to 2 water molecules using 4 electrons from cytochrome c in the IMS and 4 protons from the mitochondrial matrix.</text>
</comment>
<comment type="catalytic activity">
    <reaction evidence="1">
        <text>4 Fe(II)-[cytochrome c] + O2 + 8 H(+)(in) = 4 Fe(III)-[cytochrome c] + 2 H2O + 4 H(+)(out)</text>
        <dbReference type="Rhea" id="RHEA:11436"/>
        <dbReference type="Rhea" id="RHEA-COMP:10350"/>
        <dbReference type="Rhea" id="RHEA-COMP:14399"/>
        <dbReference type="ChEBI" id="CHEBI:15377"/>
        <dbReference type="ChEBI" id="CHEBI:15378"/>
        <dbReference type="ChEBI" id="CHEBI:15379"/>
        <dbReference type="ChEBI" id="CHEBI:29033"/>
        <dbReference type="ChEBI" id="CHEBI:29034"/>
        <dbReference type="EC" id="7.1.1.9"/>
    </reaction>
    <physiologicalReaction direction="left-to-right" evidence="1">
        <dbReference type="Rhea" id="RHEA:11437"/>
    </physiologicalReaction>
</comment>
<comment type="subunit">
    <text evidence="1">Component of the cytochrome c oxidase (complex IV, CIV), a multisubunit enzyme composed of a catalytic core of 3 subunits and several supernumerary subunits. The complex exists as a monomer or a dimer and forms supercomplexes (SCs) in the inner mitochondrial membrane with ubiquinol-cytochrome c oxidoreductase (cytochrome b-c1 complex, complex III, CIII).</text>
</comment>
<comment type="subcellular location">
    <subcellularLocation>
        <location evidence="1">Mitochondrion inner membrane</location>
        <topology evidence="1">Multi-pass membrane protein</topology>
    </subcellularLocation>
</comment>
<comment type="similarity">
    <text evidence="3">Belongs to the cytochrome c oxidase subunit 3 family.</text>
</comment>
<gene>
    <name type="primary">COIII</name>
</gene>